<comment type="catalytic activity">
    <reaction evidence="1">
        <text>D-erythro-1-(imidazol-4-yl)glycerol 3-phosphate = 3-(imidazol-4-yl)-2-oxopropyl phosphate + H2O</text>
        <dbReference type="Rhea" id="RHEA:11040"/>
        <dbReference type="ChEBI" id="CHEBI:15377"/>
        <dbReference type="ChEBI" id="CHEBI:57766"/>
        <dbReference type="ChEBI" id="CHEBI:58278"/>
        <dbReference type="EC" id="4.2.1.19"/>
    </reaction>
</comment>
<comment type="pathway">
    <text evidence="1">Amino-acid biosynthesis; L-histidine biosynthesis; L-histidine from 5-phospho-alpha-D-ribose 1-diphosphate: step 6/9.</text>
</comment>
<comment type="subcellular location">
    <subcellularLocation>
        <location evidence="1">Cytoplasm</location>
    </subcellularLocation>
</comment>
<comment type="similarity">
    <text evidence="1">Belongs to the imidazoleglycerol-phosphate dehydratase family.</text>
</comment>
<gene>
    <name evidence="1" type="primary">hisB</name>
    <name type="ordered locus">CFF8240_1189</name>
</gene>
<reference key="1">
    <citation type="submission" date="2006-11" db="EMBL/GenBank/DDBJ databases">
        <title>Sequence of Campylobacter fetus subsp. fetus 82-40.</title>
        <authorList>
            <person name="Fouts D.E."/>
            <person name="Nelson K.E."/>
        </authorList>
    </citation>
    <scope>NUCLEOTIDE SEQUENCE [LARGE SCALE GENOMIC DNA]</scope>
    <source>
        <strain>82-40</strain>
    </source>
</reference>
<dbReference type="EC" id="4.2.1.19" evidence="1"/>
<dbReference type="EMBL" id="CP000487">
    <property type="protein sequence ID" value="ABK82928.1"/>
    <property type="molecule type" value="Genomic_DNA"/>
</dbReference>
<dbReference type="RefSeq" id="WP_002849851.1">
    <property type="nucleotide sequence ID" value="NC_008599.1"/>
</dbReference>
<dbReference type="SMR" id="A0RQ64"/>
<dbReference type="GeneID" id="61065014"/>
<dbReference type="KEGG" id="cff:CFF8240_1189"/>
<dbReference type="eggNOG" id="COG0131">
    <property type="taxonomic scope" value="Bacteria"/>
</dbReference>
<dbReference type="HOGENOM" id="CLU_044308_2_0_7"/>
<dbReference type="UniPathway" id="UPA00031">
    <property type="reaction ID" value="UER00011"/>
</dbReference>
<dbReference type="Proteomes" id="UP000000760">
    <property type="component" value="Chromosome"/>
</dbReference>
<dbReference type="GO" id="GO:0005737">
    <property type="term" value="C:cytoplasm"/>
    <property type="evidence" value="ECO:0007669"/>
    <property type="project" value="UniProtKB-SubCell"/>
</dbReference>
<dbReference type="GO" id="GO:0004424">
    <property type="term" value="F:imidazoleglycerol-phosphate dehydratase activity"/>
    <property type="evidence" value="ECO:0007669"/>
    <property type="project" value="UniProtKB-UniRule"/>
</dbReference>
<dbReference type="GO" id="GO:0000105">
    <property type="term" value="P:L-histidine biosynthetic process"/>
    <property type="evidence" value="ECO:0007669"/>
    <property type="project" value="UniProtKB-UniRule"/>
</dbReference>
<dbReference type="CDD" id="cd07914">
    <property type="entry name" value="IGPD"/>
    <property type="match status" value="1"/>
</dbReference>
<dbReference type="FunFam" id="3.30.230.40:FF:000001">
    <property type="entry name" value="Imidazoleglycerol-phosphate dehydratase HisB"/>
    <property type="match status" value="1"/>
</dbReference>
<dbReference type="FunFam" id="3.30.230.40:FF:000003">
    <property type="entry name" value="Imidazoleglycerol-phosphate dehydratase HisB"/>
    <property type="match status" value="1"/>
</dbReference>
<dbReference type="Gene3D" id="3.30.230.40">
    <property type="entry name" value="Imidazole glycerol phosphate dehydratase, domain 1"/>
    <property type="match status" value="2"/>
</dbReference>
<dbReference type="HAMAP" id="MF_00076">
    <property type="entry name" value="HisB"/>
    <property type="match status" value="1"/>
</dbReference>
<dbReference type="InterPro" id="IPR038494">
    <property type="entry name" value="IGPD_sf"/>
</dbReference>
<dbReference type="InterPro" id="IPR000807">
    <property type="entry name" value="ImidazoleglycerolP_deHydtase"/>
</dbReference>
<dbReference type="InterPro" id="IPR020565">
    <property type="entry name" value="ImidazoleglycerP_deHydtase_CS"/>
</dbReference>
<dbReference type="InterPro" id="IPR020568">
    <property type="entry name" value="Ribosomal_Su5_D2-typ_SF"/>
</dbReference>
<dbReference type="NCBIfam" id="NF002111">
    <property type="entry name" value="PRK00951.2-1"/>
    <property type="match status" value="1"/>
</dbReference>
<dbReference type="NCBIfam" id="NF002114">
    <property type="entry name" value="PRK00951.2-4"/>
    <property type="match status" value="1"/>
</dbReference>
<dbReference type="PANTHER" id="PTHR23133:SF2">
    <property type="entry name" value="IMIDAZOLEGLYCEROL-PHOSPHATE DEHYDRATASE"/>
    <property type="match status" value="1"/>
</dbReference>
<dbReference type="PANTHER" id="PTHR23133">
    <property type="entry name" value="IMIDAZOLEGLYCEROL-PHOSPHATE DEHYDRATASE HIS7"/>
    <property type="match status" value="1"/>
</dbReference>
<dbReference type="Pfam" id="PF00475">
    <property type="entry name" value="IGPD"/>
    <property type="match status" value="1"/>
</dbReference>
<dbReference type="SUPFAM" id="SSF54211">
    <property type="entry name" value="Ribosomal protein S5 domain 2-like"/>
    <property type="match status" value="2"/>
</dbReference>
<dbReference type="PROSITE" id="PS00954">
    <property type="entry name" value="IGP_DEHYDRATASE_1"/>
    <property type="match status" value="1"/>
</dbReference>
<dbReference type="PROSITE" id="PS00955">
    <property type="entry name" value="IGP_DEHYDRATASE_2"/>
    <property type="match status" value="1"/>
</dbReference>
<organism>
    <name type="scientific">Campylobacter fetus subsp. fetus (strain 82-40)</name>
    <dbReference type="NCBI Taxonomy" id="360106"/>
    <lineage>
        <taxon>Bacteria</taxon>
        <taxon>Pseudomonadati</taxon>
        <taxon>Campylobacterota</taxon>
        <taxon>Epsilonproteobacteria</taxon>
        <taxon>Campylobacterales</taxon>
        <taxon>Campylobacteraceae</taxon>
        <taxon>Campylobacter</taxon>
    </lineage>
</organism>
<accession>A0RQ64</accession>
<protein>
    <recommendedName>
        <fullName evidence="1">Imidazoleglycerol-phosphate dehydratase</fullName>
        <shortName evidence="1">IGPD</shortName>
        <ecNumber evidence="1">4.2.1.19</ecNumber>
    </recommendedName>
</protein>
<keyword id="KW-0028">Amino-acid biosynthesis</keyword>
<keyword id="KW-0963">Cytoplasm</keyword>
<keyword id="KW-0368">Histidine biosynthesis</keyword>
<keyword id="KW-0456">Lyase</keyword>
<sequence>MVKKHRETKETDISVELEIYGSGKCEIDTGVGFFDHMLNALCKHSLMDIKLVCKGDLFIDDHHSVEDCGIVLGSAIKESIYPLSCVERYGNSIVVMDEAAVECAIDLSNRPYLVYESSLNEKIGTFDSELIREFFQALAMNAGITLHLIRLRGDNSHHIAEATFKAFAVAFRRAISKNDRMGTPSTKGVL</sequence>
<proteinExistence type="inferred from homology"/>
<feature type="chain" id="PRO_1000010265" description="Imidazoleglycerol-phosphate dehydratase">
    <location>
        <begin position="1"/>
        <end position="190"/>
    </location>
</feature>
<name>HIS7_CAMFF</name>
<evidence type="ECO:0000255" key="1">
    <source>
        <dbReference type="HAMAP-Rule" id="MF_00076"/>
    </source>
</evidence>